<accession>B6I9G6</accession>
<name>RL32_ECOSE</name>
<proteinExistence type="inferred from homology"/>
<reference key="1">
    <citation type="journal article" date="2008" name="DNA Res.">
        <title>Complete genome sequence and comparative analysis of the wild-type commensal Escherichia coli strain SE11 isolated from a healthy adult.</title>
        <authorList>
            <person name="Oshima K."/>
            <person name="Toh H."/>
            <person name="Ogura Y."/>
            <person name="Sasamoto H."/>
            <person name="Morita H."/>
            <person name="Park S.-H."/>
            <person name="Ooka T."/>
            <person name="Iyoda S."/>
            <person name="Taylor T.D."/>
            <person name="Hayashi T."/>
            <person name="Itoh K."/>
            <person name="Hattori M."/>
        </authorList>
    </citation>
    <scope>NUCLEOTIDE SEQUENCE [LARGE SCALE GENOMIC DNA]</scope>
    <source>
        <strain>SE11</strain>
    </source>
</reference>
<sequence>MAVQQNKPTRSKRGMRRSHDALTAVTSLSVDKTSGEKHLRHHITADGYYRGRKVIAK</sequence>
<organism>
    <name type="scientific">Escherichia coli (strain SE11)</name>
    <dbReference type="NCBI Taxonomy" id="409438"/>
    <lineage>
        <taxon>Bacteria</taxon>
        <taxon>Pseudomonadati</taxon>
        <taxon>Pseudomonadota</taxon>
        <taxon>Gammaproteobacteria</taxon>
        <taxon>Enterobacterales</taxon>
        <taxon>Enterobacteriaceae</taxon>
        <taxon>Escherichia</taxon>
    </lineage>
</organism>
<dbReference type="EMBL" id="AP009240">
    <property type="protein sequence ID" value="BAG76677.1"/>
    <property type="molecule type" value="Genomic_DNA"/>
</dbReference>
<dbReference type="RefSeq" id="WP_000290727.1">
    <property type="nucleotide sequence ID" value="NC_011415.1"/>
</dbReference>
<dbReference type="SMR" id="B6I9G6"/>
<dbReference type="GeneID" id="93776319"/>
<dbReference type="KEGG" id="ecy:ECSE_1153"/>
<dbReference type="HOGENOM" id="CLU_129084_2_1_6"/>
<dbReference type="Proteomes" id="UP000008199">
    <property type="component" value="Chromosome"/>
</dbReference>
<dbReference type="GO" id="GO:0015934">
    <property type="term" value="C:large ribosomal subunit"/>
    <property type="evidence" value="ECO:0007669"/>
    <property type="project" value="InterPro"/>
</dbReference>
<dbReference type="GO" id="GO:0003735">
    <property type="term" value="F:structural constituent of ribosome"/>
    <property type="evidence" value="ECO:0007669"/>
    <property type="project" value="InterPro"/>
</dbReference>
<dbReference type="GO" id="GO:0006412">
    <property type="term" value="P:translation"/>
    <property type="evidence" value="ECO:0007669"/>
    <property type="project" value="UniProtKB-UniRule"/>
</dbReference>
<dbReference type="HAMAP" id="MF_00340">
    <property type="entry name" value="Ribosomal_bL32"/>
    <property type="match status" value="1"/>
</dbReference>
<dbReference type="InterPro" id="IPR002677">
    <property type="entry name" value="Ribosomal_bL32"/>
</dbReference>
<dbReference type="InterPro" id="IPR044957">
    <property type="entry name" value="Ribosomal_bL32_bact"/>
</dbReference>
<dbReference type="InterPro" id="IPR011332">
    <property type="entry name" value="Ribosomal_zn-bd"/>
</dbReference>
<dbReference type="NCBIfam" id="TIGR01031">
    <property type="entry name" value="rpmF_bact"/>
    <property type="match status" value="1"/>
</dbReference>
<dbReference type="PANTHER" id="PTHR35534">
    <property type="entry name" value="50S RIBOSOMAL PROTEIN L32"/>
    <property type="match status" value="1"/>
</dbReference>
<dbReference type="PANTHER" id="PTHR35534:SF1">
    <property type="entry name" value="LARGE RIBOSOMAL SUBUNIT PROTEIN BL32"/>
    <property type="match status" value="1"/>
</dbReference>
<dbReference type="Pfam" id="PF01783">
    <property type="entry name" value="Ribosomal_L32p"/>
    <property type="match status" value="1"/>
</dbReference>
<dbReference type="SUPFAM" id="SSF57829">
    <property type="entry name" value="Zn-binding ribosomal proteins"/>
    <property type="match status" value="1"/>
</dbReference>
<evidence type="ECO:0000255" key="1">
    <source>
        <dbReference type="HAMAP-Rule" id="MF_00340"/>
    </source>
</evidence>
<evidence type="ECO:0000256" key="2">
    <source>
        <dbReference type="SAM" id="MobiDB-lite"/>
    </source>
</evidence>
<evidence type="ECO:0000305" key="3"/>
<keyword id="KW-0687">Ribonucleoprotein</keyword>
<keyword id="KW-0689">Ribosomal protein</keyword>
<feature type="chain" id="PRO_1000120122" description="Large ribosomal subunit protein bL32">
    <location>
        <begin position="1"/>
        <end position="57"/>
    </location>
</feature>
<feature type="region of interest" description="Disordered" evidence="2">
    <location>
        <begin position="1"/>
        <end position="38"/>
    </location>
</feature>
<gene>
    <name evidence="1" type="primary">rpmF</name>
    <name type="ordered locus">ECSE_1153</name>
</gene>
<protein>
    <recommendedName>
        <fullName evidence="1">Large ribosomal subunit protein bL32</fullName>
    </recommendedName>
    <alternativeName>
        <fullName evidence="3">50S ribosomal protein L32</fullName>
    </alternativeName>
</protein>
<comment type="similarity">
    <text evidence="1">Belongs to the bacterial ribosomal protein bL32 family.</text>
</comment>